<accession>Q3J1M1</accession>
<name>RS6_CERS4</name>
<evidence type="ECO:0000255" key="1">
    <source>
        <dbReference type="HAMAP-Rule" id="MF_00360"/>
    </source>
</evidence>
<evidence type="ECO:0000256" key="2">
    <source>
        <dbReference type="SAM" id="MobiDB-lite"/>
    </source>
</evidence>
<evidence type="ECO:0000305" key="3"/>
<reference key="1">
    <citation type="submission" date="2005-09" db="EMBL/GenBank/DDBJ databases">
        <title>Complete sequence of chromosome 1 of Rhodobacter sphaeroides 2.4.1.</title>
        <authorList>
            <person name="Copeland A."/>
            <person name="Lucas S."/>
            <person name="Lapidus A."/>
            <person name="Barry K."/>
            <person name="Detter J.C."/>
            <person name="Glavina T."/>
            <person name="Hammon N."/>
            <person name="Israni S."/>
            <person name="Pitluck S."/>
            <person name="Richardson P."/>
            <person name="Mackenzie C."/>
            <person name="Choudhary M."/>
            <person name="Larimer F."/>
            <person name="Hauser L.J."/>
            <person name="Land M."/>
            <person name="Donohue T.J."/>
            <person name="Kaplan S."/>
        </authorList>
    </citation>
    <scope>NUCLEOTIDE SEQUENCE [LARGE SCALE GENOMIC DNA]</scope>
    <source>
        <strain>ATCC 17023 / DSM 158 / JCM 6121 / CCUG 31486 / LMG 2827 / NBRC 12203 / NCIMB 8253 / ATH 2.4.1.</strain>
    </source>
</reference>
<feature type="chain" id="PRO_0000229571" description="Small ribosomal subunit protein bS6">
    <location>
        <begin position="1"/>
        <end position="132"/>
    </location>
</feature>
<feature type="region of interest" description="Disordered" evidence="2">
    <location>
        <begin position="96"/>
        <end position="132"/>
    </location>
</feature>
<feature type="compositionally biased region" description="Basic and acidic residues" evidence="2">
    <location>
        <begin position="105"/>
        <end position="132"/>
    </location>
</feature>
<protein>
    <recommendedName>
        <fullName evidence="1">Small ribosomal subunit protein bS6</fullName>
    </recommendedName>
    <alternativeName>
        <fullName evidence="3">30S ribosomal protein S6</fullName>
    </alternativeName>
</protein>
<sequence length="132" mass="15192">MSLYEHVFIARQDLSNAQAEGLIEHFSTVLADNGGKVVDREYWGVKTMAYKINKNRKGHYAFLKSDAPSAAVQEMERLMRLHDDVMRVLTIKVDKHAEGPSIQMQKRDERERGDRGDRSDRGDRGDRGGFRR</sequence>
<dbReference type="EMBL" id="CP000143">
    <property type="protein sequence ID" value="ABA79313.1"/>
    <property type="molecule type" value="Genomic_DNA"/>
</dbReference>
<dbReference type="RefSeq" id="WP_011338020.1">
    <property type="nucleotide sequence ID" value="NC_007493.2"/>
</dbReference>
<dbReference type="RefSeq" id="YP_353214.1">
    <property type="nucleotide sequence ID" value="NC_007493.2"/>
</dbReference>
<dbReference type="SMR" id="Q3J1M1"/>
<dbReference type="STRING" id="272943.RSP_0139"/>
<dbReference type="EnsemblBacteria" id="ABA79313">
    <property type="protein sequence ID" value="ABA79313"/>
    <property type="gene ID" value="RSP_0139"/>
</dbReference>
<dbReference type="GeneID" id="3719559"/>
<dbReference type="KEGG" id="rsp:RSP_0139"/>
<dbReference type="PATRIC" id="fig|272943.9.peg.2079"/>
<dbReference type="eggNOG" id="COG0360">
    <property type="taxonomic scope" value="Bacteria"/>
</dbReference>
<dbReference type="OrthoDB" id="9812702at2"/>
<dbReference type="PhylomeDB" id="Q3J1M1"/>
<dbReference type="Proteomes" id="UP000002703">
    <property type="component" value="Chromosome 1"/>
</dbReference>
<dbReference type="GO" id="GO:0022627">
    <property type="term" value="C:cytosolic small ribosomal subunit"/>
    <property type="evidence" value="ECO:0007669"/>
    <property type="project" value="TreeGrafter"/>
</dbReference>
<dbReference type="GO" id="GO:0070181">
    <property type="term" value="F:small ribosomal subunit rRNA binding"/>
    <property type="evidence" value="ECO:0007669"/>
    <property type="project" value="TreeGrafter"/>
</dbReference>
<dbReference type="GO" id="GO:0003735">
    <property type="term" value="F:structural constituent of ribosome"/>
    <property type="evidence" value="ECO:0007669"/>
    <property type="project" value="InterPro"/>
</dbReference>
<dbReference type="GO" id="GO:0006412">
    <property type="term" value="P:translation"/>
    <property type="evidence" value="ECO:0007669"/>
    <property type="project" value="UniProtKB-UniRule"/>
</dbReference>
<dbReference type="CDD" id="cd00473">
    <property type="entry name" value="bS6"/>
    <property type="match status" value="1"/>
</dbReference>
<dbReference type="Gene3D" id="3.30.70.60">
    <property type="match status" value="1"/>
</dbReference>
<dbReference type="HAMAP" id="MF_00360">
    <property type="entry name" value="Ribosomal_bS6"/>
    <property type="match status" value="1"/>
</dbReference>
<dbReference type="InterPro" id="IPR000529">
    <property type="entry name" value="Ribosomal_bS6"/>
</dbReference>
<dbReference type="InterPro" id="IPR035980">
    <property type="entry name" value="Ribosomal_bS6_sf"/>
</dbReference>
<dbReference type="InterPro" id="IPR020814">
    <property type="entry name" value="Ribosomal_S6_plastid/chlpt"/>
</dbReference>
<dbReference type="InterPro" id="IPR014717">
    <property type="entry name" value="Transl_elong_EF1B/ribsomal_bS6"/>
</dbReference>
<dbReference type="NCBIfam" id="TIGR00166">
    <property type="entry name" value="S6"/>
    <property type="match status" value="1"/>
</dbReference>
<dbReference type="PANTHER" id="PTHR21011">
    <property type="entry name" value="MITOCHONDRIAL 28S RIBOSOMAL PROTEIN S6"/>
    <property type="match status" value="1"/>
</dbReference>
<dbReference type="PANTHER" id="PTHR21011:SF1">
    <property type="entry name" value="SMALL RIBOSOMAL SUBUNIT PROTEIN BS6M"/>
    <property type="match status" value="1"/>
</dbReference>
<dbReference type="Pfam" id="PF01250">
    <property type="entry name" value="Ribosomal_S6"/>
    <property type="match status" value="1"/>
</dbReference>
<dbReference type="SUPFAM" id="SSF54995">
    <property type="entry name" value="Ribosomal protein S6"/>
    <property type="match status" value="1"/>
</dbReference>
<keyword id="KW-1185">Reference proteome</keyword>
<keyword id="KW-0687">Ribonucleoprotein</keyword>
<keyword id="KW-0689">Ribosomal protein</keyword>
<keyword id="KW-0694">RNA-binding</keyword>
<keyword id="KW-0699">rRNA-binding</keyword>
<proteinExistence type="inferred from homology"/>
<organism>
    <name type="scientific">Cereibacter sphaeroides (strain ATCC 17023 / DSM 158 / JCM 6121 / CCUG 31486 / LMG 2827 / NBRC 12203 / NCIMB 8253 / ATH 2.4.1.)</name>
    <name type="common">Rhodobacter sphaeroides</name>
    <dbReference type="NCBI Taxonomy" id="272943"/>
    <lineage>
        <taxon>Bacteria</taxon>
        <taxon>Pseudomonadati</taxon>
        <taxon>Pseudomonadota</taxon>
        <taxon>Alphaproteobacteria</taxon>
        <taxon>Rhodobacterales</taxon>
        <taxon>Paracoccaceae</taxon>
        <taxon>Cereibacter</taxon>
    </lineage>
</organism>
<comment type="function">
    <text evidence="1">Binds together with bS18 to 16S ribosomal RNA.</text>
</comment>
<comment type="similarity">
    <text evidence="1">Belongs to the bacterial ribosomal protein bS6 family.</text>
</comment>
<gene>
    <name evidence="1" type="primary">rpsF</name>
    <name type="ordered locus">RHOS4_17450</name>
    <name type="ORF">RSP_0139</name>
</gene>